<organism>
    <name type="scientific">Caenorhabditis elegans</name>
    <dbReference type="NCBI Taxonomy" id="6239"/>
    <lineage>
        <taxon>Eukaryota</taxon>
        <taxon>Metazoa</taxon>
        <taxon>Ecdysozoa</taxon>
        <taxon>Nematoda</taxon>
        <taxon>Chromadorea</taxon>
        <taxon>Rhabditida</taxon>
        <taxon>Rhabditina</taxon>
        <taxon>Rhabditomorpha</taxon>
        <taxon>Rhabditoidea</taxon>
        <taxon>Rhabditidae</taxon>
        <taxon>Peloderinae</taxon>
        <taxon>Caenorhabditis</taxon>
    </lineage>
</organism>
<feature type="signal peptide" evidence="4">
    <location>
        <begin position="1"/>
        <end position="24"/>
    </location>
</feature>
<feature type="chain" id="PRO_0000041475" description="Protein mom-2">
    <location>
        <begin position="25"/>
        <end position="362"/>
    </location>
</feature>
<feature type="region of interest" description="Disordered" evidence="5">
    <location>
        <begin position="263"/>
        <end position="282"/>
    </location>
</feature>
<feature type="compositionally biased region" description="Low complexity" evidence="5">
    <location>
        <begin position="265"/>
        <end position="274"/>
    </location>
</feature>
<feature type="lipid moiety-binding region" description="O-palmitoleoyl serine; by mom-1" evidence="3">
    <location>
        <position position="223"/>
    </location>
</feature>
<feature type="glycosylation site" description="N-linked (GlcNAc...) asparagine" evidence="4">
    <location>
        <position position="90"/>
    </location>
</feature>
<feature type="disulfide bond" evidence="2">
    <location>
        <begin position="80"/>
        <end position="91"/>
    </location>
</feature>
<feature type="disulfide bond" evidence="2">
    <location>
        <begin position="129"/>
        <end position="137"/>
    </location>
</feature>
<feature type="disulfide bond" evidence="2">
    <location>
        <begin position="139"/>
        <end position="167"/>
    </location>
</feature>
<feature type="disulfide bond" evidence="2">
    <location>
        <begin position="217"/>
        <end position="231"/>
    </location>
</feature>
<feature type="disulfide bond" evidence="2">
    <location>
        <begin position="219"/>
        <end position="226"/>
    </location>
</feature>
<feature type="disulfide bond" evidence="2">
    <location>
        <begin position="304"/>
        <end position="322"/>
    </location>
</feature>
<feature type="disulfide bond" evidence="2">
    <location>
        <begin position="313"/>
        <end position="317"/>
    </location>
</feature>
<feature type="disulfide bond" evidence="2">
    <location>
        <begin position="321"/>
        <end position="361"/>
    </location>
</feature>
<feature type="disulfide bond" evidence="2">
    <location>
        <begin position="337"/>
        <end position="352"/>
    </location>
</feature>
<feature type="disulfide bond" evidence="2">
    <location>
        <begin position="339"/>
        <end position="349"/>
    </location>
</feature>
<feature type="disulfide bond" evidence="2">
    <location>
        <begin position="344"/>
        <end position="345"/>
    </location>
</feature>
<proteinExistence type="evidence at transcript level"/>
<keyword id="KW-0217">Developmental protein</keyword>
<keyword id="KW-1015">Disulfide bond</keyword>
<keyword id="KW-0272">Extracellular matrix</keyword>
<keyword id="KW-0325">Glycoprotein</keyword>
<keyword id="KW-0449">Lipoprotein</keyword>
<keyword id="KW-1185">Reference proteome</keyword>
<keyword id="KW-0964">Secreted</keyword>
<keyword id="KW-0732">Signal</keyword>
<keyword id="KW-0879">Wnt signaling pathway</keyword>
<comment type="function">
    <text evidence="6 7 8 10 12 13">Ligand for members of the frizzled family of seven transmembrane receptors. Required in embryonic development for endoderm specification and the correct positioning and orientation of the mitotic spindles and division planes in blastomere cells (PubMed:16678095, PubMed:25344071, PubMed:9288749, PubMed:9288750). Involved in cleavage axis determination (PubMed:9288750). Binds to receptor tyrosine kinase cam-1 (PubMed:17942487). Together with wnt ligand lin-44, plays a role in controlling vulva precursor cell P7.p lineage orientation during vulva development, probably by acting as a ligand for tyrosine kinase receptor lin-18 (PubMed:15369677). May act redundantly with other Wnt ligands such as cwn-1 and cwn-2 to control seam cell polarity (PubMed:22022276).</text>
</comment>
<comment type="subcellular location">
    <subcellularLocation>
        <location>Secreted</location>
        <location>Extracellular space</location>
        <location>Extracellular matrix</location>
    </subcellularLocation>
</comment>
<comment type="tissue specificity">
    <text evidence="6 9">Expressed by anchor cell and vulva precursor cell descendants P5.ppa, P5.ppp, P7.paa and P7.pap (PubMed:15369677). Expressed in the tail and weakly expressed in the vulva and body wall muscles (PubMed:20711352).</text>
</comment>
<comment type="PTM">
    <text evidence="1 3">Palmitoleoylation is required for efficient binding to frizzled receptors. Depalmitoleoylation leads to Wnt signaling pathway inhibition.</text>
</comment>
<comment type="disruption phenotype">
    <text evidence="7 11 12">Embryonic lethal with severely defective embryonic morphogenesis with the formation of unspecified differentiated tissues, no endoderm and excess mesoderm (PubMed:9288749). In addition, embryos have defective mitotic spindle orientation in the 8-cell stage ABar blastomere (PubMed:16678095, PubMed:9288749). RNAi-mediated knockdown results in irregular distribution of the mitotic spindle orientating factor sdn-1 and wnt signaling protein mig-5, with premature accumulation of sdn-1 on the cell surface of the ABar blastomere during the prophase stage of mitosis, and reduced accumulation of mig-5 at cell contact sites between the Abar and C blastomere cells, respectively (PubMed:25344071).</text>
</comment>
<comment type="similarity">
    <text evidence="14">Belongs to the Wnt family.</text>
</comment>
<sequence length="362" mass="40191">MHINTPVLLAIIYFLVFAPKSADAWWLLSKTDTSSANSGSSPILCKNVPGLTPQQKRMCHENPNIIKYLISGLRSALHTCEYTFQREAWNCTLTLPGVGTSPLQIASRESAYVYAISAAGVSHSLARACSKGLIDDCGCGETPQGSGSVAVSQASSRSSSDFVWAGCSDNVKFGNTFGRKFVDQYDRQHATEPRSQMNLHNNRVGRRLLVNAMNKECKCHGVSGSCVTKTCWKVMPKFDEFASRLHQKYQLAKLVTNNDQKLTVRSSPSAGSSGRSERFARNMDASSKQMRNELIYLDASPNYCAIDVKDRECGENCPNICCGRGWRTTREIVDEPCHCQFVWCCEVKCKTCKKLVERNYCL</sequence>
<dbReference type="EMBL" id="AF013952">
    <property type="protein sequence ID" value="AAC47749.1"/>
    <property type="molecule type" value="mRNA"/>
</dbReference>
<dbReference type="EMBL" id="FO080433">
    <property type="protein sequence ID" value="CCD63659.1"/>
    <property type="molecule type" value="Genomic_DNA"/>
</dbReference>
<dbReference type="PIR" id="T34254">
    <property type="entry name" value="T34254"/>
</dbReference>
<dbReference type="PIR" id="T42049">
    <property type="entry name" value="T42049"/>
</dbReference>
<dbReference type="RefSeq" id="NP_505154.1">
    <property type="nucleotide sequence ID" value="NM_072753.7"/>
</dbReference>
<dbReference type="SMR" id="Q10459"/>
<dbReference type="BioGRID" id="44258">
    <property type="interactions" value="35"/>
</dbReference>
<dbReference type="DIP" id="DIP-26433N"/>
<dbReference type="FunCoup" id="Q10459">
    <property type="interactions" value="158"/>
</dbReference>
<dbReference type="IntAct" id="Q10459">
    <property type="interactions" value="2"/>
</dbReference>
<dbReference type="STRING" id="6239.F38E1.7.1"/>
<dbReference type="GlyCosmos" id="Q10459">
    <property type="glycosylation" value="1 site, No reported glycans"/>
</dbReference>
<dbReference type="PaxDb" id="6239-F38E1.7"/>
<dbReference type="EnsemblMetazoa" id="F38E1.7.1">
    <property type="protein sequence ID" value="F38E1.7.1"/>
    <property type="gene ID" value="WBGene00003395"/>
</dbReference>
<dbReference type="GeneID" id="179217"/>
<dbReference type="KEGG" id="cel:CELE_F38E1.7"/>
<dbReference type="UCSC" id="F38E1.7">
    <property type="organism name" value="c. elegans"/>
</dbReference>
<dbReference type="AGR" id="WB:WBGene00003395"/>
<dbReference type="CTD" id="179217"/>
<dbReference type="WormBase" id="F38E1.7">
    <property type="protein sequence ID" value="CE17806"/>
    <property type="gene ID" value="WBGene00003395"/>
    <property type="gene designation" value="mom-2"/>
</dbReference>
<dbReference type="eggNOG" id="KOG3913">
    <property type="taxonomic scope" value="Eukaryota"/>
</dbReference>
<dbReference type="HOGENOM" id="CLU_033039_1_3_1"/>
<dbReference type="InParanoid" id="Q10459"/>
<dbReference type="OMA" id="HTCEYTF"/>
<dbReference type="OrthoDB" id="5945655at2759"/>
<dbReference type="PhylomeDB" id="Q10459"/>
<dbReference type="Reactome" id="R-CEL-3238698">
    <property type="pathway name" value="WNT ligand biogenesis and trafficking"/>
</dbReference>
<dbReference type="Reactome" id="R-CEL-4086398">
    <property type="pathway name" value="Ca2+ pathway"/>
</dbReference>
<dbReference type="Reactome" id="R-CEL-4086400">
    <property type="pathway name" value="PCP/CE pathway"/>
</dbReference>
<dbReference type="SignaLink" id="Q10459"/>
<dbReference type="PRO" id="PR:Q10459"/>
<dbReference type="Proteomes" id="UP000001940">
    <property type="component" value="Chromosome V"/>
</dbReference>
<dbReference type="Bgee" id="WBGene00003395">
    <property type="expression patterns" value="Expressed in cell and 21 other cell types or tissues"/>
</dbReference>
<dbReference type="GO" id="GO:0005576">
    <property type="term" value="C:extracellular region"/>
    <property type="evidence" value="ECO:0000250"/>
    <property type="project" value="WormBase"/>
</dbReference>
<dbReference type="GO" id="GO:0005615">
    <property type="term" value="C:extracellular space"/>
    <property type="evidence" value="ECO:0000318"/>
    <property type="project" value="GO_Central"/>
</dbReference>
<dbReference type="GO" id="GO:0005125">
    <property type="term" value="F:cytokine activity"/>
    <property type="evidence" value="ECO:0000318"/>
    <property type="project" value="GO_Central"/>
</dbReference>
<dbReference type="GO" id="GO:0005109">
    <property type="term" value="F:frizzled binding"/>
    <property type="evidence" value="ECO:0000250"/>
    <property type="project" value="WormBase"/>
</dbReference>
<dbReference type="GO" id="GO:0030971">
    <property type="term" value="F:receptor tyrosine kinase binding"/>
    <property type="evidence" value="ECO:0000353"/>
    <property type="project" value="WormBase"/>
</dbReference>
<dbReference type="GO" id="GO:0045167">
    <property type="term" value="P:asymmetric protein localization involved in cell fate determination"/>
    <property type="evidence" value="ECO:0000315"/>
    <property type="project" value="WormBase"/>
</dbReference>
<dbReference type="GO" id="GO:0060070">
    <property type="term" value="P:canonical Wnt signaling pathway"/>
    <property type="evidence" value="ECO:0000315"/>
    <property type="project" value="UniProtKB"/>
</dbReference>
<dbReference type="GO" id="GO:0045165">
    <property type="term" value="P:cell fate commitment"/>
    <property type="evidence" value="ECO:0000318"/>
    <property type="project" value="GO_Central"/>
</dbReference>
<dbReference type="GO" id="GO:0048557">
    <property type="term" value="P:embryonic digestive tract morphogenesis"/>
    <property type="evidence" value="ECO:0000316"/>
    <property type="project" value="UniProtKB"/>
</dbReference>
<dbReference type="GO" id="GO:0048598">
    <property type="term" value="P:embryonic morphogenesis"/>
    <property type="evidence" value="ECO:0000315"/>
    <property type="project" value="WormBase"/>
</dbReference>
<dbReference type="GO" id="GO:0001714">
    <property type="term" value="P:endodermal cell fate specification"/>
    <property type="evidence" value="ECO:0000315"/>
    <property type="project" value="WormBase"/>
</dbReference>
<dbReference type="GO" id="GO:0030010">
    <property type="term" value="P:establishment of cell polarity"/>
    <property type="evidence" value="ECO:0000315"/>
    <property type="project" value="WormBase"/>
</dbReference>
<dbReference type="GO" id="GO:0000132">
    <property type="term" value="P:establishment of mitotic spindle orientation"/>
    <property type="evidence" value="ECO:0000315"/>
    <property type="project" value="UniProtKB"/>
</dbReference>
<dbReference type="GO" id="GO:1904936">
    <property type="term" value="P:interneuron migration"/>
    <property type="evidence" value="ECO:0000316"/>
    <property type="project" value="UniProtKB"/>
</dbReference>
<dbReference type="GO" id="GO:0070986">
    <property type="term" value="P:left/right axis specification"/>
    <property type="evidence" value="ECO:0000315"/>
    <property type="project" value="UniProtKB"/>
</dbReference>
<dbReference type="GO" id="GO:0097475">
    <property type="term" value="P:motor neuron migration"/>
    <property type="evidence" value="ECO:0000316"/>
    <property type="project" value="UniProtKB"/>
</dbReference>
<dbReference type="GO" id="GO:0097402">
    <property type="term" value="P:neuroblast migration"/>
    <property type="evidence" value="ECO:0000316"/>
    <property type="project" value="UniProtKB"/>
</dbReference>
<dbReference type="GO" id="GO:0030182">
    <property type="term" value="P:neuron differentiation"/>
    <property type="evidence" value="ECO:0000318"/>
    <property type="project" value="GO_Central"/>
</dbReference>
<dbReference type="GO" id="GO:0001764">
    <property type="term" value="P:neuron migration"/>
    <property type="evidence" value="ECO:0000316"/>
    <property type="project" value="UniProtKB"/>
</dbReference>
<dbReference type="GO" id="GO:1905485">
    <property type="term" value="P:positive regulation of motor neuron migration"/>
    <property type="evidence" value="ECO:0000316"/>
    <property type="project" value="UniProtKB"/>
</dbReference>
<dbReference type="GO" id="GO:0016055">
    <property type="term" value="P:Wnt signaling pathway"/>
    <property type="evidence" value="ECO:0000250"/>
    <property type="project" value="WormBase"/>
</dbReference>
<dbReference type="CDD" id="cd13113">
    <property type="entry name" value="Wnt"/>
    <property type="match status" value="1"/>
</dbReference>
<dbReference type="FunFam" id="3.30.2460.20:FF:000007">
    <property type="entry name" value="Protein Wnt"/>
    <property type="match status" value="1"/>
</dbReference>
<dbReference type="Gene3D" id="3.30.2460.20">
    <property type="match status" value="1"/>
</dbReference>
<dbReference type="InterPro" id="IPR005817">
    <property type="entry name" value="Wnt"/>
</dbReference>
<dbReference type="InterPro" id="IPR043158">
    <property type="entry name" value="Wnt_C"/>
</dbReference>
<dbReference type="InterPro" id="IPR018161">
    <property type="entry name" value="Wnt_CS"/>
</dbReference>
<dbReference type="PANTHER" id="PTHR12027:SF114">
    <property type="entry name" value="PROTEIN MOM-2"/>
    <property type="match status" value="1"/>
</dbReference>
<dbReference type="PANTHER" id="PTHR12027">
    <property type="entry name" value="WNT RELATED"/>
    <property type="match status" value="1"/>
</dbReference>
<dbReference type="Pfam" id="PF00110">
    <property type="entry name" value="wnt"/>
    <property type="match status" value="1"/>
</dbReference>
<dbReference type="PRINTS" id="PR01349">
    <property type="entry name" value="WNTPROTEIN"/>
</dbReference>
<dbReference type="SMART" id="SM00097">
    <property type="entry name" value="WNT1"/>
    <property type="match status" value="1"/>
</dbReference>
<dbReference type="PROSITE" id="PS00246">
    <property type="entry name" value="WNT1"/>
    <property type="match status" value="1"/>
</dbReference>
<reference key="1">
    <citation type="journal article" date="1997" name="Cell">
        <title>Wnt signaling and an APC-related gene specify endoderm in early C. elegans embryos.</title>
        <authorList>
            <person name="Rocheleau C.E."/>
            <person name="Downs W.D."/>
            <person name="Lin R."/>
            <person name="Wittmann C."/>
            <person name="Bei Y."/>
            <person name="Cha Y.-H."/>
            <person name="Ali M."/>
            <person name="Priess J.R."/>
            <person name="Mello C.C."/>
        </authorList>
    </citation>
    <scope>NUCLEOTIDE SEQUENCE [MRNA]</scope>
    <scope>FUNCTION</scope>
    <source>
        <strain>Bristol N2</strain>
    </source>
</reference>
<reference key="2">
    <citation type="journal article" date="1998" name="Science">
        <title>Genome sequence of the nematode C. elegans: a platform for investigating biology.</title>
        <authorList>
            <consortium name="The C. elegans sequencing consortium"/>
        </authorList>
    </citation>
    <scope>NUCLEOTIDE SEQUENCE [LARGE SCALE GENOMIC DNA]</scope>
    <source>
        <strain>Bristol N2</strain>
    </source>
</reference>
<reference key="3">
    <citation type="journal article" date="1997" name="Cell">
        <title>Wnt signaling polarizes an early C. elegans blastomere to distinguish endoderm from mesoderm.</title>
        <authorList>
            <person name="Thorpe C.J."/>
            <person name="Schlesinger A."/>
            <person name="Carter J.C."/>
            <person name="Bowerman B."/>
        </authorList>
    </citation>
    <scope>FUNCTION</scope>
    <scope>DISRUPTION PHENOTYPE</scope>
</reference>
<reference key="4">
    <citation type="journal article" date="2004" name="Cell">
        <title>C. elegans LIN-18 is a Ryk ortholog and functions in parallel to LIN-17/Frizzled in Wnt signaling.</title>
        <authorList>
            <person name="Inoue T."/>
            <person name="Oz H.S."/>
            <person name="Wiland D."/>
            <person name="Gharib S."/>
            <person name="Deshpande R."/>
            <person name="Hill R.J."/>
            <person name="Katz W.S."/>
            <person name="Sternberg P.W."/>
        </authorList>
    </citation>
    <scope>FUNCTION</scope>
    <scope>TISSUE SPECIFICITY</scope>
</reference>
<reference key="5">
    <citation type="journal article" date="2006" name="Cell">
        <title>Wntless, a conserved membrane protein dedicated to the secretion of Wnt proteins from signaling cells.</title>
        <authorList>
            <person name="Baenziger C."/>
            <person name="Soldini D."/>
            <person name="Schuett C."/>
            <person name="Zipperlen P."/>
            <person name="Hausmann G."/>
            <person name="Basler K."/>
        </authorList>
    </citation>
    <scope>FUNCTION</scope>
    <scope>DISRUPTION PHENOTYPE</scope>
</reference>
<reference key="6">
    <citation type="journal article" date="2007" name="Development">
        <title>The C. elegans ROR receptor tyrosine kinase, CAM-1, non-autonomously inhibits the Wnt pathway.</title>
        <authorList>
            <person name="Green J.L."/>
            <person name="Inoue T."/>
            <person name="Sternberg P.W."/>
        </authorList>
    </citation>
    <scope>FUNCTION</scope>
</reference>
<reference key="7">
    <citation type="journal article" date="2010" name="PLoS Genet.">
        <title>A Wnt-Frz/Ror-Dsh pathway regulates neurite outgrowth in Caenorhabditis elegans.</title>
        <authorList>
            <person name="Song S."/>
            <person name="Zhang B."/>
            <person name="Sun H."/>
            <person name="Li X."/>
            <person name="Xiang Y."/>
            <person name="Liu Z."/>
            <person name="Huang X."/>
            <person name="Ding M."/>
        </authorList>
    </citation>
    <scope>TISSUE SPECIFICITY</scope>
</reference>
<reference key="8">
    <citation type="journal article" date="2011" name="PLoS Genet.">
        <title>Multiple Wnts redundantly control polarity orientation in Caenorhabditis elegans epithelial stem cells.</title>
        <authorList>
            <person name="Yamamoto Y."/>
            <person name="Takeshita H."/>
            <person name="Sawa H."/>
        </authorList>
    </citation>
    <scope>FUNCTION</scope>
</reference>
<reference key="9">
    <citation type="journal article" date="2014" name="Development">
        <title>Syndecan defines precise spindle orientation by modulating Wnt signaling in C. elegans.</title>
        <authorList>
            <person name="Dejima K."/>
            <person name="Kang S."/>
            <person name="Mitani S."/>
            <person name="Cosman P.C."/>
            <person name="Chisholm A.D."/>
        </authorList>
    </citation>
    <scope>FUNCTION</scope>
    <scope>DISRUPTION PHENOTYPE</scope>
</reference>
<protein>
    <recommendedName>
        <fullName>Protein mom-2</fullName>
    </recommendedName>
</protein>
<accession>Q10459</accession>
<accession>O16146</accession>
<evidence type="ECO:0000250" key="1">
    <source>
        <dbReference type="UniProtKB" id="P27467"/>
    </source>
</evidence>
<evidence type="ECO:0000250" key="2">
    <source>
        <dbReference type="UniProtKB" id="P28026"/>
    </source>
</evidence>
<evidence type="ECO:0000250" key="3">
    <source>
        <dbReference type="UniProtKB" id="P56704"/>
    </source>
</evidence>
<evidence type="ECO:0000255" key="4"/>
<evidence type="ECO:0000256" key="5">
    <source>
        <dbReference type="SAM" id="MobiDB-lite"/>
    </source>
</evidence>
<evidence type="ECO:0000269" key="6">
    <source>
    </source>
</evidence>
<evidence type="ECO:0000269" key="7">
    <source>
    </source>
</evidence>
<evidence type="ECO:0000269" key="8">
    <source>
    </source>
</evidence>
<evidence type="ECO:0000269" key="9">
    <source>
    </source>
</evidence>
<evidence type="ECO:0000269" key="10">
    <source>
    </source>
</evidence>
<evidence type="ECO:0000269" key="11">
    <source>
    </source>
</evidence>
<evidence type="ECO:0000269" key="12">
    <source>
    </source>
</evidence>
<evidence type="ECO:0000269" key="13">
    <source>
    </source>
</evidence>
<evidence type="ECO:0000305" key="14"/>
<name>MOM2_CAEEL</name>
<gene>
    <name type="primary">mom-2</name>
    <name type="ORF">F38E1.7</name>
</gene>